<dbReference type="EMBL" id="CP001063">
    <property type="protein sequence ID" value="ACD07851.1"/>
    <property type="molecule type" value="Genomic_DNA"/>
</dbReference>
<dbReference type="RefSeq" id="WP_001144069.1">
    <property type="nucleotide sequence ID" value="NC_010658.1"/>
</dbReference>
<dbReference type="SMR" id="B2U1G8"/>
<dbReference type="STRING" id="344609.SbBS512_E3499"/>
<dbReference type="GeneID" id="98390195"/>
<dbReference type="KEGG" id="sbc:SbBS512_E3499"/>
<dbReference type="HOGENOM" id="CLU_159258_1_0_6"/>
<dbReference type="Proteomes" id="UP000001030">
    <property type="component" value="Chromosome"/>
</dbReference>
<dbReference type="GO" id="GO:1990904">
    <property type="term" value="C:ribonucleoprotein complex"/>
    <property type="evidence" value="ECO:0007669"/>
    <property type="project" value="UniProtKB-KW"/>
</dbReference>
<dbReference type="GO" id="GO:0005840">
    <property type="term" value="C:ribosome"/>
    <property type="evidence" value="ECO:0007669"/>
    <property type="project" value="UniProtKB-KW"/>
</dbReference>
<dbReference type="GO" id="GO:0003735">
    <property type="term" value="F:structural constituent of ribosome"/>
    <property type="evidence" value="ECO:0007669"/>
    <property type="project" value="InterPro"/>
</dbReference>
<dbReference type="GO" id="GO:0006412">
    <property type="term" value="P:translation"/>
    <property type="evidence" value="ECO:0007669"/>
    <property type="project" value="UniProtKB-UniRule"/>
</dbReference>
<dbReference type="FunFam" id="1.20.5.1150:FF:000001">
    <property type="entry name" value="30S ribosomal protein S21"/>
    <property type="match status" value="1"/>
</dbReference>
<dbReference type="Gene3D" id="1.20.5.1150">
    <property type="entry name" value="Ribosomal protein S8"/>
    <property type="match status" value="1"/>
</dbReference>
<dbReference type="HAMAP" id="MF_00358">
    <property type="entry name" value="Ribosomal_bS21"/>
    <property type="match status" value="1"/>
</dbReference>
<dbReference type="InterPro" id="IPR001911">
    <property type="entry name" value="Ribosomal_bS21"/>
</dbReference>
<dbReference type="InterPro" id="IPR018278">
    <property type="entry name" value="Ribosomal_bS21_CS"/>
</dbReference>
<dbReference type="InterPro" id="IPR038380">
    <property type="entry name" value="Ribosomal_bS21_sf"/>
</dbReference>
<dbReference type="NCBIfam" id="TIGR00030">
    <property type="entry name" value="S21p"/>
    <property type="match status" value="1"/>
</dbReference>
<dbReference type="PANTHER" id="PTHR21109">
    <property type="entry name" value="MITOCHONDRIAL 28S RIBOSOMAL PROTEIN S21"/>
    <property type="match status" value="1"/>
</dbReference>
<dbReference type="PANTHER" id="PTHR21109:SF22">
    <property type="entry name" value="SMALL RIBOSOMAL SUBUNIT PROTEIN BS21"/>
    <property type="match status" value="1"/>
</dbReference>
<dbReference type="Pfam" id="PF01165">
    <property type="entry name" value="Ribosomal_S21"/>
    <property type="match status" value="1"/>
</dbReference>
<dbReference type="PRINTS" id="PR00976">
    <property type="entry name" value="RIBOSOMALS21"/>
</dbReference>
<dbReference type="PROSITE" id="PS01181">
    <property type="entry name" value="RIBOSOMAL_S21"/>
    <property type="match status" value="1"/>
</dbReference>
<evidence type="ECO:0000255" key="1">
    <source>
        <dbReference type="HAMAP-Rule" id="MF_00358"/>
    </source>
</evidence>
<evidence type="ECO:0000256" key="2">
    <source>
        <dbReference type="SAM" id="MobiDB-lite"/>
    </source>
</evidence>
<evidence type="ECO:0000305" key="3"/>
<reference key="1">
    <citation type="submission" date="2008-05" db="EMBL/GenBank/DDBJ databases">
        <title>Complete sequence of Shigella boydii serotype 18 strain BS512.</title>
        <authorList>
            <person name="Rasko D.A."/>
            <person name="Rosovitz M."/>
            <person name="Maurelli A.T."/>
            <person name="Myers G."/>
            <person name="Seshadri R."/>
            <person name="Cer R."/>
            <person name="Jiang L."/>
            <person name="Ravel J."/>
            <person name="Sebastian Y."/>
        </authorList>
    </citation>
    <scope>NUCLEOTIDE SEQUENCE [LARGE SCALE GENOMIC DNA]</scope>
    <source>
        <strain>CDC 3083-94 / BS512</strain>
    </source>
</reference>
<comment type="similarity">
    <text evidence="1">Belongs to the bacterial ribosomal protein bS21 family.</text>
</comment>
<proteinExistence type="inferred from homology"/>
<sequence length="71" mass="8500">MPVIKVRENEPFDVALRRFKRSCEKAGVLAEVRRREFYEKPTTERKRAKASAVKRHAKKLARENARRTRLY</sequence>
<gene>
    <name evidence="1" type="primary">rpsU</name>
    <name type="ordered locus">SbBS512_E3499</name>
</gene>
<protein>
    <recommendedName>
        <fullName evidence="1">Small ribosomal subunit protein bS21</fullName>
    </recommendedName>
    <alternativeName>
        <fullName evidence="3">30S ribosomal protein S21</fullName>
    </alternativeName>
</protein>
<feature type="chain" id="PRO_1000120664" description="Small ribosomal subunit protein bS21">
    <location>
        <begin position="1"/>
        <end position="71"/>
    </location>
</feature>
<feature type="region of interest" description="Disordered" evidence="2">
    <location>
        <begin position="43"/>
        <end position="71"/>
    </location>
</feature>
<feature type="compositionally biased region" description="Basic residues" evidence="2">
    <location>
        <begin position="46"/>
        <end position="59"/>
    </location>
</feature>
<feature type="compositionally biased region" description="Basic and acidic residues" evidence="2">
    <location>
        <begin position="60"/>
        <end position="71"/>
    </location>
</feature>
<name>RS21_SHIB3</name>
<keyword id="KW-1185">Reference proteome</keyword>
<keyword id="KW-0687">Ribonucleoprotein</keyword>
<keyword id="KW-0689">Ribosomal protein</keyword>
<organism>
    <name type="scientific">Shigella boydii serotype 18 (strain CDC 3083-94 / BS512)</name>
    <dbReference type="NCBI Taxonomy" id="344609"/>
    <lineage>
        <taxon>Bacteria</taxon>
        <taxon>Pseudomonadati</taxon>
        <taxon>Pseudomonadota</taxon>
        <taxon>Gammaproteobacteria</taxon>
        <taxon>Enterobacterales</taxon>
        <taxon>Enterobacteriaceae</taxon>
        <taxon>Shigella</taxon>
    </lineage>
</organism>
<accession>B2U1G8</accession>